<protein>
    <recommendedName>
        <fullName evidence="1">2,3-bisphosphoglycerate-dependent phosphoglycerate mutase</fullName>
        <shortName evidence="1">BPG-dependent PGAM</shortName>
        <shortName evidence="1">PGAM</shortName>
        <shortName evidence="1">Phosphoglyceromutase</shortName>
        <shortName evidence="1">dPGM</shortName>
        <ecNumber evidence="1">5.4.2.11</ecNumber>
    </recommendedName>
</protein>
<organism>
    <name type="scientific">Protochlamydia amoebophila (strain UWE25)</name>
    <dbReference type="NCBI Taxonomy" id="264201"/>
    <lineage>
        <taxon>Bacteria</taxon>
        <taxon>Pseudomonadati</taxon>
        <taxon>Chlamydiota</taxon>
        <taxon>Chlamydiia</taxon>
        <taxon>Parachlamydiales</taxon>
        <taxon>Parachlamydiaceae</taxon>
        <taxon>Candidatus Protochlamydia</taxon>
    </lineage>
</organism>
<comment type="function">
    <text evidence="1">Catalyzes the interconversion of 2-phosphoglycerate and 3-phosphoglycerate.</text>
</comment>
<comment type="catalytic activity">
    <reaction evidence="1">
        <text>(2R)-2-phosphoglycerate = (2R)-3-phosphoglycerate</text>
        <dbReference type="Rhea" id="RHEA:15901"/>
        <dbReference type="ChEBI" id="CHEBI:58272"/>
        <dbReference type="ChEBI" id="CHEBI:58289"/>
        <dbReference type="EC" id="5.4.2.11"/>
    </reaction>
</comment>
<comment type="pathway">
    <text evidence="1">Carbohydrate degradation; glycolysis; pyruvate from D-glyceraldehyde 3-phosphate: step 3/5.</text>
</comment>
<comment type="similarity">
    <text evidence="1">Belongs to the phosphoglycerate mutase family. BPG-dependent PGAM subfamily.</text>
</comment>
<reference key="1">
    <citation type="journal article" date="2004" name="Science">
        <title>Illuminating the evolutionary history of chlamydiae.</title>
        <authorList>
            <person name="Horn M."/>
            <person name="Collingro A."/>
            <person name="Schmitz-Esser S."/>
            <person name="Beier C.L."/>
            <person name="Purkhold U."/>
            <person name="Fartmann B."/>
            <person name="Brandt P."/>
            <person name="Nyakatura G.J."/>
            <person name="Droege M."/>
            <person name="Frishman D."/>
            <person name="Rattei T."/>
            <person name="Mewes H.-W."/>
            <person name="Wagner M."/>
        </authorList>
    </citation>
    <scope>NUCLEOTIDE SEQUENCE [LARGE SCALE GENOMIC DNA]</scope>
    <source>
        <strain>UWE25</strain>
    </source>
</reference>
<proteinExistence type="inferred from homology"/>
<keyword id="KW-0312">Gluconeogenesis</keyword>
<keyword id="KW-0324">Glycolysis</keyword>
<keyword id="KW-0413">Isomerase</keyword>
<keyword id="KW-1185">Reference proteome</keyword>
<accession>Q6MEW4</accession>
<dbReference type="EC" id="5.4.2.11" evidence="1"/>
<dbReference type="EMBL" id="BX908798">
    <property type="protein sequence ID" value="CAF22885.1"/>
    <property type="molecule type" value="Genomic_DNA"/>
</dbReference>
<dbReference type="RefSeq" id="WP_011174711.1">
    <property type="nucleotide sequence ID" value="NC_005861.2"/>
</dbReference>
<dbReference type="SMR" id="Q6MEW4"/>
<dbReference type="STRING" id="264201.pc0161"/>
<dbReference type="KEGG" id="pcu:PC_RS00790"/>
<dbReference type="eggNOG" id="COG0588">
    <property type="taxonomic scope" value="Bacteria"/>
</dbReference>
<dbReference type="HOGENOM" id="CLU_033323_1_4_0"/>
<dbReference type="OrthoDB" id="9781415at2"/>
<dbReference type="UniPathway" id="UPA00109">
    <property type="reaction ID" value="UER00186"/>
</dbReference>
<dbReference type="Proteomes" id="UP000000529">
    <property type="component" value="Chromosome"/>
</dbReference>
<dbReference type="GO" id="GO:0004619">
    <property type="term" value="F:phosphoglycerate mutase activity"/>
    <property type="evidence" value="ECO:0007669"/>
    <property type="project" value="UniProtKB-EC"/>
</dbReference>
<dbReference type="GO" id="GO:0006094">
    <property type="term" value="P:gluconeogenesis"/>
    <property type="evidence" value="ECO:0007669"/>
    <property type="project" value="UniProtKB-UniRule"/>
</dbReference>
<dbReference type="GO" id="GO:0006096">
    <property type="term" value="P:glycolytic process"/>
    <property type="evidence" value="ECO:0007669"/>
    <property type="project" value="UniProtKB-UniRule"/>
</dbReference>
<dbReference type="CDD" id="cd07067">
    <property type="entry name" value="HP_PGM_like"/>
    <property type="match status" value="1"/>
</dbReference>
<dbReference type="Gene3D" id="3.40.50.1240">
    <property type="entry name" value="Phosphoglycerate mutase-like"/>
    <property type="match status" value="1"/>
</dbReference>
<dbReference type="HAMAP" id="MF_01039">
    <property type="entry name" value="PGAM_GpmA"/>
    <property type="match status" value="1"/>
</dbReference>
<dbReference type="InterPro" id="IPR013078">
    <property type="entry name" value="His_Pase_superF_clade-1"/>
</dbReference>
<dbReference type="InterPro" id="IPR029033">
    <property type="entry name" value="His_PPase_superfam"/>
</dbReference>
<dbReference type="InterPro" id="IPR001345">
    <property type="entry name" value="PG/BPGM_mutase_AS"/>
</dbReference>
<dbReference type="InterPro" id="IPR005952">
    <property type="entry name" value="Phosphogly_mut1"/>
</dbReference>
<dbReference type="NCBIfam" id="NF002217">
    <property type="entry name" value="PRK01112.1"/>
    <property type="match status" value="1"/>
</dbReference>
<dbReference type="PANTHER" id="PTHR11931">
    <property type="entry name" value="PHOSPHOGLYCERATE MUTASE"/>
    <property type="match status" value="1"/>
</dbReference>
<dbReference type="Pfam" id="PF00300">
    <property type="entry name" value="His_Phos_1"/>
    <property type="match status" value="2"/>
</dbReference>
<dbReference type="SMART" id="SM00855">
    <property type="entry name" value="PGAM"/>
    <property type="match status" value="1"/>
</dbReference>
<dbReference type="SUPFAM" id="SSF53254">
    <property type="entry name" value="Phosphoglycerate mutase-like"/>
    <property type="match status" value="1"/>
</dbReference>
<dbReference type="PROSITE" id="PS00175">
    <property type="entry name" value="PG_MUTASE"/>
    <property type="match status" value="1"/>
</dbReference>
<feature type="chain" id="PRO_0000179899" description="2,3-bisphosphoglycerate-dependent phosphoglycerate mutase">
    <location>
        <begin position="1"/>
        <end position="226"/>
    </location>
</feature>
<feature type="active site" description="Tele-phosphohistidine intermediate" evidence="1">
    <location>
        <position position="9"/>
    </location>
</feature>
<feature type="active site" description="Proton donor/acceptor" evidence="1">
    <location>
        <position position="112"/>
    </location>
</feature>
<feature type="binding site" evidence="1">
    <location>
        <begin position="8"/>
        <end position="15"/>
    </location>
    <ligand>
        <name>substrate</name>
    </ligand>
</feature>
<feature type="binding site" evidence="1">
    <location>
        <begin position="21"/>
        <end position="22"/>
    </location>
    <ligand>
        <name>substrate</name>
    </ligand>
</feature>
<feature type="binding site" evidence="1">
    <location>
        <position position="58"/>
    </location>
    <ligand>
        <name>substrate</name>
    </ligand>
</feature>
<feature type="binding site" evidence="1">
    <location>
        <begin position="112"/>
        <end position="115"/>
    </location>
    <ligand>
        <name>substrate</name>
    </ligand>
</feature>
<feature type="binding site" evidence="1">
    <location>
        <position position="123"/>
    </location>
    <ligand>
        <name>substrate</name>
    </ligand>
</feature>
<feature type="binding site" evidence="1">
    <location>
        <begin position="139"/>
        <end position="140"/>
    </location>
    <ligand>
        <name>substrate</name>
    </ligand>
</feature>
<feature type="binding site" evidence="1">
    <location>
        <begin position="183"/>
        <end position="184"/>
    </location>
    <ligand>
        <name>substrate</name>
    </ligand>
</feature>
<feature type="site" description="Transition state stabilizer" evidence="1">
    <location>
        <position position="182"/>
    </location>
</feature>
<name>GPMA_PARUW</name>
<evidence type="ECO:0000255" key="1">
    <source>
        <dbReference type="HAMAP-Rule" id="MF_01039"/>
    </source>
</evidence>
<sequence length="226" mass="25683">MVKLILMRHGQSQWNLANLFTGWVDIPLSFKGIEEAIEAGKQIKNYPIDLIFTSSLIRAQMTAMLAMSVHTSGKVPVILHTGEGRLEEWASIYSSESQSQTIPVIRAWELNERMYGELQGINKEEMAKKYGAEQVHIWRRSFDVPPPNGESLQMTAARTIPYFENTIVPHLKEKKNIFIAAHGNSLRSIIMKLDGLTTDQVVKLELATGVPVIYDFNHDEYIKQQK</sequence>
<gene>
    <name evidence="1" type="primary">gpmA</name>
    <name type="synonym">pgmA</name>
    <name type="ordered locus">pc0161</name>
</gene>